<dbReference type="EC" id="7.1.2.2" evidence="1"/>
<dbReference type="EMBL" id="AF008210">
    <property type="protein sequence ID" value="AAC38112.1"/>
    <property type="molecule type" value="Genomic_DNA"/>
</dbReference>
<dbReference type="EMBL" id="AE013218">
    <property type="protein sequence ID" value="AAM67578.1"/>
    <property type="molecule type" value="Genomic_DNA"/>
</dbReference>
<dbReference type="RefSeq" id="WP_011053544.1">
    <property type="nucleotide sequence ID" value="NC_004061.1"/>
</dbReference>
<dbReference type="SMR" id="O51874"/>
<dbReference type="STRING" id="198804.BUsg_006"/>
<dbReference type="GeneID" id="93003468"/>
<dbReference type="KEGG" id="bas:BUsg_006"/>
<dbReference type="eggNOG" id="COG0056">
    <property type="taxonomic scope" value="Bacteria"/>
</dbReference>
<dbReference type="HOGENOM" id="CLU_010091_2_1_6"/>
<dbReference type="Proteomes" id="UP000000416">
    <property type="component" value="Chromosome"/>
</dbReference>
<dbReference type="GO" id="GO:0005886">
    <property type="term" value="C:plasma membrane"/>
    <property type="evidence" value="ECO:0007669"/>
    <property type="project" value="UniProtKB-SubCell"/>
</dbReference>
<dbReference type="GO" id="GO:0045259">
    <property type="term" value="C:proton-transporting ATP synthase complex"/>
    <property type="evidence" value="ECO:0007669"/>
    <property type="project" value="UniProtKB-KW"/>
</dbReference>
<dbReference type="GO" id="GO:0043531">
    <property type="term" value="F:ADP binding"/>
    <property type="evidence" value="ECO:0007669"/>
    <property type="project" value="TreeGrafter"/>
</dbReference>
<dbReference type="GO" id="GO:0005524">
    <property type="term" value="F:ATP binding"/>
    <property type="evidence" value="ECO:0007669"/>
    <property type="project" value="UniProtKB-UniRule"/>
</dbReference>
<dbReference type="GO" id="GO:0046933">
    <property type="term" value="F:proton-transporting ATP synthase activity, rotational mechanism"/>
    <property type="evidence" value="ECO:0007669"/>
    <property type="project" value="UniProtKB-UniRule"/>
</dbReference>
<dbReference type="CDD" id="cd18113">
    <property type="entry name" value="ATP-synt_F1_alpha_C"/>
    <property type="match status" value="1"/>
</dbReference>
<dbReference type="CDD" id="cd18116">
    <property type="entry name" value="ATP-synt_F1_alpha_N"/>
    <property type="match status" value="1"/>
</dbReference>
<dbReference type="CDD" id="cd01132">
    <property type="entry name" value="F1-ATPase_alpha_CD"/>
    <property type="match status" value="1"/>
</dbReference>
<dbReference type="FunFam" id="1.20.150.20:FF:000001">
    <property type="entry name" value="ATP synthase subunit alpha"/>
    <property type="match status" value="1"/>
</dbReference>
<dbReference type="FunFam" id="2.40.30.20:FF:000001">
    <property type="entry name" value="ATP synthase subunit alpha"/>
    <property type="match status" value="1"/>
</dbReference>
<dbReference type="FunFam" id="3.40.50.300:FF:000002">
    <property type="entry name" value="ATP synthase subunit alpha"/>
    <property type="match status" value="1"/>
</dbReference>
<dbReference type="Gene3D" id="2.40.30.20">
    <property type="match status" value="1"/>
</dbReference>
<dbReference type="Gene3D" id="1.20.150.20">
    <property type="entry name" value="ATP synthase alpha/beta chain, C-terminal domain"/>
    <property type="match status" value="1"/>
</dbReference>
<dbReference type="Gene3D" id="3.40.50.300">
    <property type="entry name" value="P-loop containing nucleotide triphosphate hydrolases"/>
    <property type="match status" value="1"/>
</dbReference>
<dbReference type="HAMAP" id="MF_01346">
    <property type="entry name" value="ATP_synth_alpha_bact"/>
    <property type="match status" value="1"/>
</dbReference>
<dbReference type="InterPro" id="IPR023366">
    <property type="entry name" value="ATP_synth_asu-like_sf"/>
</dbReference>
<dbReference type="InterPro" id="IPR000793">
    <property type="entry name" value="ATP_synth_asu_C"/>
</dbReference>
<dbReference type="InterPro" id="IPR038376">
    <property type="entry name" value="ATP_synth_asu_C_sf"/>
</dbReference>
<dbReference type="InterPro" id="IPR033732">
    <property type="entry name" value="ATP_synth_F1_a_nt-bd_dom"/>
</dbReference>
<dbReference type="InterPro" id="IPR005294">
    <property type="entry name" value="ATP_synth_F1_asu"/>
</dbReference>
<dbReference type="InterPro" id="IPR020003">
    <property type="entry name" value="ATPase_a/bsu_AS"/>
</dbReference>
<dbReference type="InterPro" id="IPR004100">
    <property type="entry name" value="ATPase_F1/V1/A1_a/bsu_N"/>
</dbReference>
<dbReference type="InterPro" id="IPR036121">
    <property type="entry name" value="ATPase_F1/V1/A1_a/bsu_N_sf"/>
</dbReference>
<dbReference type="InterPro" id="IPR000194">
    <property type="entry name" value="ATPase_F1/V1/A1_a/bsu_nucl-bd"/>
</dbReference>
<dbReference type="InterPro" id="IPR027417">
    <property type="entry name" value="P-loop_NTPase"/>
</dbReference>
<dbReference type="NCBIfam" id="TIGR00962">
    <property type="entry name" value="atpA"/>
    <property type="match status" value="1"/>
</dbReference>
<dbReference type="NCBIfam" id="NF009884">
    <property type="entry name" value="PRK13343.1"/>
    <property type="match status" value="1"/>
</dbReference>
<dbReference type="PANTHER" id="PTHR48082">
    <property type="entry name" value="ATP SYNTHASE SUBUNIT ALPHA, MITOCHONDRIAL"/>
    <property type="match status" value="1"/>
</dbReference>
<dbReference type="PANTHER" id="PTHR48082:SF2">
    <property type="entry name" value="ATP SYNTHASE SUBUNIT ALPHA, MITOCHONDRIAL"/>
    <property type="match status" value="1"/>
</dbReference>
<dbReference type="Pfam" id="PF00006">
    <property type="entry name" value="ATP-synt_ab"/>
    <property type="match status" value="1"/>
</dbReference>
<dbReference type="Pfam" id="PF00306">
    <property type="entry name" value="ATP-synt_ab_C"/>
    <property type="match status" value="1"/>
</dbReference>
<dbReference type="Pfam" id="PF02874">
    <property type="entry name" value="ATP-synt_ab_N"/>
    <property type="match status" value="1"/>
</dbReference>
<dbReference type="SUPFAM" id="SSF47917">
    <property type="entry name" value="C-terminal domain of alpha and beta subunits of F1 ATP synthase"/>
    <property type="match status" value="1"/>
</dbReference>
<dbReference type="SUPFAM" id="SSF50615">
    <property type="entry name" value="N-terminal domain of alpha and beta subunits of F1 ATP synthase"/>
    <property type="match status" value="1"/>
</dbReference>
<dbReference type="SUPFAM" id="SSF52540">
    <property type="entry name" value="P-loop containing nucleoside triphosphate hydrolases"/>
    <property type="match status" value="1"/>
</dbReference>
<dbReference type="PROSITE" id="PS00152">
    <property type="entry name" value="ATPASE_ALPHA_BETA"/>
    <property type="match status" value="1"/>
</dbReference>
<feature type="chain" id="PRO_0000144321" description="ATP synthase subunit alpha">
    <location>
        <begin position="1"/>
        <end position="510"/>
    </location>
</feature>
<feature type="binding site" evidence="1">
    <location>
        <begin position="169"/>
        <end position="176"/>
    </location>
    <ligand>
        <name>ATP</name>
        <dbReference type="ChEBI" id="CHEBI:30616"/>
    </ligand>
</feature>
<feature type="site" description="Required for activity">
    <location>
        <position position="373"/>
    </location>
</feature>
<feature type="sequence conflict" description="In Ref. 1; no nucleotide entry and 2; AAC38112." evidence="2" ref="1 2">
    <original>A</original>
    <variation>R</variation>
    <location>
        <position position="269"/>
    </location>
</feature>
<keyword id="KW-0066">ATP synthesis</keyword>
<keyword id="KW-0067">ATP-binding</keyword>
<keyword id="KW-1003">Cell membrane</keyword>
<keyword id="KW-0139">CF(1)</keyword>
<keyword id="KW-0375">Hydrogen ion transport</keyword>
<keyword id="KW-0406">Ion transport</keyword>
<keyword id="KW-0472">Membrane</keyword>
<keyword id="KW-0547">Nucleotide-binding</keyword>
<keyword id="KW-1278">Translocase</keyword>
<keyword id="KW-0813">Transport</keyword>
<gene>
    <name evidence="1" type="primary">atpA</name>
    <name type="ordered locus">BUsg_006</name>
</gene>
<sequence length="510" mass="56391">MQLNSTEISQLIKERIAQFEVFNQSYNEGTIISVNDGIIKIYGLSDVMLGEMILLPDNEYAIALNIERDTIGAVVMGPYIHITEGTKVRCTGKILEVPVGVALLGRIVNALGFPIDGKGSIEHDIYLPVEADAPGVIERESINEPIQTGYKAIDAMVPIGRGQRELIIGDRQTGKTALAIDTIINQKKINLPCVYVAIGQKLSTIINVVKKLDEHDALLNTIVVVASASEAASLQYLAPYSGCAMGEYFRDRGKDALIVYDDLSKHAVAYRQISLLLRRPPGREAFPGDVFYLHSRLLERASRVSKEHVKNVTKGKITGKTGSLTALPIIETQSGDVSAFVPTNVISITDGQIFLESNLFNSGIRPAVNAGISVSRVGSAAQTKIIKKLSSGIRTALAQYHELAAFSQFASDLDQTTRKQLIYGQKITELLKQKQYRPMSISEQGLMFFIAENNFLDDISVENIIQFEKEILTYAYNYHLDLMEEINKDGNFNDIIKKKFIELINNFKNS</sequence>
<reference key="1">
    <citation type="journal article" date="1997" name="Curr. Microbiol.">
        <title>The (F1F0) ATP synthase of Buchnera aphidicola (endosymbiont of aphids): genetic analysis of the putative ATP operon.</title>
        <authorList>
            <person name="Clark M.A."/>
            <person name="Baumann P."/>
        </authorList>
    </citation>
    <scope>NUCLEOTIDE SEQUENCE [GENOMIC DNA]</scope>
</reference>
<reference key="2">
    <citation type="journal article" date="1998" name="Curr. Microbiol.">
        <title>Sequence analysis of a 34.7-kb DNA segment from the genome of Buchnera aphidicola (endosymbiont of aphids) containing groEL, dnaA, the atp operon, gidA, and rho.</title>
        <authorList>
            <person name="Clark M.A."/>
            <person name="Baumann L."/>
            <person name="Baumann P."/>
        </authorList>
    </citation>
    <scope>NUCLEOTIDE SEQUENCE [GENOMIC DNA]</scope>
</reference>
<reference key="3">
    <citation type="journal article" date="2002" name="Science">
        <title>50 million years of genomic stasis in endosymbiotic bacteria.</title>
        <authorList>
            <person name="Tamas I."/>
            <person name="Klasson L."/>
            <person name="Canbaeck B."/>
            <person name="Naeslund A.K."/>
            <person name="Eriksson A.-S."/>
            <person name="Wernegreen J.J."/>
            <person name="Sandstroem J.P."/>
            <person name="Moran N.A."/>
            <person name="Andersson S.G.E."/>
        </authorList>
    </citation>
    <scope>NUCLEOTIDE SEQUENCE [LARGE SCALE GENOMIC DNA]</scope>
    <source>
        <strain>Sg</strain>
    </source>
</reference>
<accession>O51874</accession>
<evidence type="ECO:0000255" key="1">
    <source>
        <dbReference type="HAMAP-Rule" id="MF_01346"/>
    </source>
</evidence>
<evidence type="ECO:0000305" key="2"/>
<organism>
    <name type="scientific">Buchnera aphidicola subsp. Schizaphis graminum (strain Sg)</name>
    <dbReference type="NCBI Taxonomy" id="198804"/>
    <lineage>
        <taxon>Bacteria</taxon>
        <taxon>Pseudomonadati</taxon>
        <taxon>Pseudomonadota</taxon>
        <taxon>Gammaproteobacteria</taxon>
        <taxon>Enterobacterales</taxon>
        <taxon>Erwiniaceae</taxon>
        <taxon>Buchnera</taxon>
    </lineage>
</organism>
<protein>
    <recommendedName>
        <fullName evidence="1">ATP synthase subunit alpha</fullName>
        <ecNumber evidence="1">7.1.2.2</ecNumber>
    </recommendedName>
    <alternativeName>
        <fullName evidence="1">ATP synthase F1 sector subunit alpha</fullName>
    </alternativeName>
    <alternativeName>
        <fullName evidence="1">F-ATPase subunit alpha</fullName>
    </alternativeName>
</protein>
<comment type="function">
    <text>Produces ATP from ADP in the presence of a proton gradient across the membrane. The alpha chain is a regulatory subunit.</text>
</comment>
<comment type="catalytic activity">
    <reaction evidence="1">
        <text>ATP + H2O + 4 H(+)(in) = ADP + phosphate + 5 H(+)(out)</text>
        <dbReference type="Rhea" id="RHEA:57720"/>
        <dbReference type="ChEBI" id="CHEBI:15377"/>
        <dbReference type="ChEBI" id="CHEBI:15378"/>
        <dbReference type="ChEBI" id="CHEBI:30616"/>
        <dbReference type="ChEBI" id="CHEBI:43474"/>
        <dbReference type="ChEBI" id="CHEBI:456216"/>
        <dbReference type="EC" id="7.1.2.2"/>
    </reaction>
</comment>
<comment type="subunit">
    <text evidence="1">F-type ATPases have 2 components, CF(1) - the catalytic core - and CF(0) - the membrane proton channel. CF(1) has five subunits: alpha(3), beta(3), gamma(1), delta(1), epsilon(1). CF(0) has three main subunits: a(1), b(2) and c(9-12). The alpha and beta chains form an alternating ring which encloses part of the gamma chain. CF(1) is attached to CF(0) by a central stalk formed by the gamma and epsilon chains, while a peripheral stalk is formed by the delta and b chains.</text>
</comment>
<comment type="subcellular location">
    <subcellularLocation>
        <location evidence="1">Cell membrane</location>
        <topology evidence="1">Peripheral membrane protein</topology>
    </subcellularLocation>
</comment>
<comment type="similarity">
    <text evidence="1">Belongs to the ATPase alpha/beta chains family.</text>
</comment>
<proteinExistence type="inferred from homology"/>
<name>ATPA_BUCAP</name>